<name>ALDH_CRAPL</name>
<protein>
    <recommendedName>
        <fullName>Aldehyde dehydrogenase</fullName>
        <ecNumber>1.2.1.3</ecNumber>
    </recommendedName>
    <alternativeName>
        <fullName>Cp-ALDH</fullName>
    </alternativeName>
</protein>
<keyword id="KW-0035">Amyloplast</keyword>
<keyword id="KW-0150">Chloroplast</keyword>
<keyword id="KW-0520">NAD</keyword>
<keyword id="KW-0560">Oxidoreductase</keyword>
<keyword id="KW-0934">Plastid</keyword>
<keyword id="KW-0346">Stress response</keyword>
<sequence>MSQVDAEGVVDGLRRTYISGKTKSYEWRVSQLKALLKITTHHDKEVVEALRADLKKPEHEAYVHEIFMVSNACKSALKELHQWMKPQKVKTSLATYPSSAEIVSEPLGVVLVITAWNYPFLLALDPMIGAIAAGNCVVLKPSEIAPATSALLAKLLNQYVDTSAIRVVEGAVPEMQALLDQRWDKIFYTGSSKVGQIVLSSAAKHLTPVVLELGGKCPTVVDANIDLKVAARRIISWKWSGNSGQTCISPDYIITTEENAPKLVDAIKCELESFYGKDPLKSQDMSSIINERQFERMTGLLDDKKVSDKIVYGGQSDKSNLKIAPTILLDVSEDSSVMSEEIFGPLLPIITVGKIEECYKIIASKPKPLAAYLFTNDKKRTEEFVSNVSAGGITINDIALHFLEPRLPFGGVGESGMGSYHGKFSFDAFSHKKSVLKRSFGGEVAARYPPYAPWKLHFMEAILQGDIFGLLKAWLGWSS</sequence>
<feature type="chain" id="PRO_0000256068" description="Aldehyde dehydrogenase">
    <location>
        <begin position="1"/>
        <end position="479"/>
    </location>
</feature>
<feature type="active site" description="Proton acceptor" evidence="1">
    <location>
        <position position="212"/>
    </location>
</feature>
<feature type="active site" description="Nucleophile" evidence="1">
    <location>
        <position position="247"/>
    </location>
</feature>
<feature type="binding site" evidence="1">
    <location>
        <begin position="190"/>
        <end position="195"/>
    </location>
    <ligand>
        <name>NAD(+)</name>
        <dbReference type="ChEBI" id="CHEBI:57540"/>
    </ligand>
</feature>
<feature type="site" description="Transition state stabilizer" evidence="1">
    <location>
        <position position="117"/>
    </location>
</feature>
<accession>Q8VXQ2</accession>
<proteinExistence type="evidence at protein level"/>
<organism>
    <name type="scientific">Craterostigma plantagineum</name>
    <name type="common">Blue gem</name>
    <name type="synonym">Torenia plantagineum</name>
    <dbReference type="NCBI Taxonomy" id="4153"/>
    <lineage>
        <taxon>Eukaryota</taxon>
        <taxon>Viridiplantae</taxon>
        <taxon>Streptophyta</taxon>
        <taxon>Embryophyta</taxon>
        <taxon>Tracheophyta</taxon>
        <taxon>Spermatophyta</taxon>
        <taxon>Magnoliopsida</taxon>
        <taxon>eudicotyledons</taxon>
        <taxon>Gunneridae</taxon>
        <taxon>Pentapetalae</taxon>
        <taxon>asterids</taxon>
        <taxon>lamiids</taxon>
        <taxon>Lamiales</taxon>
        <taxon>Linderniaceae</taxon>
        <taxon>Craterostigma</taxon>
    </lineage>
</organism>
<dbReference type="EC" id="1.2.1.3"/>
<dbReference type="EMBL" id="AJ306960">
    <property type="protein sequence ID" value="CAC84900.1"/>
    <property type="molecule type" value="mRNA"/>
</dbReference>
<dbReference type="SMR" id="Q8VXQ2"/>
<dbReference type="GO" id="GO:0009501">
    <property type="term" value="C:amyloplast"/>
    <property type="evidence" value="ECO:0007669"/>
    <property type="project" value="UniProtKB-SubCell"/>
</dbReference>
<dbReference type="GO" id="GO:0009507">
    <property type="term" value="C:chloroplast"/>
    <property type="evidence" value="ECO:0007669"/>
    <property type="project" value="UniProtKB-SubCell"/>
</dbReference>
<dbReference type="GO" id="GO:0004029">
    <property type="term" value="F:aldehyde dehydrogenase (NAD+) activity"/>
    <property type="evidence" value="ECO:0007669"/>
    <property type="project" value="UniProtKB-EC"/>
</dbReference>
<dbReference type="GO" id="GO:0006081">
    <property type="term" value="P:aldehyde metabolic process"/>
    <property type="evidence" value="ECO:0007669"/>
    <property type="project" value="InterPro"/>
</dbReference>
<dbReference type="FunFam" id="3.40.309.10:FF:000003">
    <property type="entry name" value="Aldehyde dehydrogenase"/>
    <property type="match status" value="1"/>
</dbReference>
<dbReference type="FunFam" id="3.40.605.10:FF:000004">
    <property type="entry name" value="Aldehyde dehydrogenase"/>
    <property type="match status" value="1"/>
</dbReference>
<dbReference type="Gene3D" id="3.40.605.10">
    <property type="entry name" value="Aldehyde Dehydrogenase, Chain A, domain 1"/>
    <property type="match status" value="1"/>
</dbReference>
<dbReference type="Gene3D" id="3.40.309.10">
    <property type="entry name" value="Aldehyde Dehydrogenase, Chain A, domain 2"/>
    <property type="match status" value="1"/>
</dbReference>
<dbReference type="InterPro" id="IPR016161">
    <property type="entry name" value="Ald_DH/histidinol_DH"/>
</dbReference>
<dbReference type="InterPro" id="IPR016163">
    <property type="entry name" value="Ald_DH_C"/>
</dbReference>
<dbReference type="InterPro" id="IPR016162">
    <property type="entry name" value="Ald_DH_N"/>
</dbReference>
<dbReference type="InterPro" id="IPR015590">
    <property type="entry name" value="Aldehyde_DH_dom"/>
</dbReference>
<dbReference type="InterPro" id="IPR012394">
    <property type="entry name" value="Aldehyde_DH_NAD(P)"/>
</dbReference>
<dbReference type="PANTHER" id="PTHR43570">
    <property type="entry name" value="ALDEHYDE DEHYDROGENASE"/>
    <property type="match status" value="1"/>
</dbReference>
<dbReference type="PANTHER" id="PTHR43570:SF16">
    <property type="entry name" value="ALDEHYDE DEHYDROGENASE TYPE III, ISOFORM Q"/>
    <property type="match status" value="1"/>
</dbReference>
<dbReference type="Pfam" id="PF00171">
    <property type="entry name" value="Aldedh"/>
    <property type="match status" value="1"/>
</dbReference>
<dbReference type="PIRSF" id="PIRSF036492">
    <property type="entry name" value="ALDH"/>
    <property type="match status" value="1"/>
</dbReference>
<dbReference type="SUPFAM" id="SSF53720">
    <property type="entry name" value="ALDH-like"/>
    <property type="match status" value="1"/>
</dbReference>
<reference key="1">
    <citation type="journal article" date="2001" name="Plant J.">
        <title>Novel ABA- and dehydration-inducible aldehyde dehydrogenase genes isolated from the resurrection plant Craterostigma plantagineum and Arabidopsis thaliana.</title>
        <authorList>
            <person name="Kirch H.-H."/>
            <person name="Nair A."/>
            <person name="Bartels D."/>
        </authorList>
    </citation>
    <scope>NUCLEOTIDE SEQUENCE [MRNA]</scope>
    <scope>FUNCTION</scope>
    <scope>BIOPHYSICOCHEMICAL PROPERTIES</scope>
    <scope>SUBCELLULAR LOCATION</scope>
    <scope>INDUCTION</scope>
</reference>
<evidence type="ECO:0000250" key="1"/>
<evidence type="ECO:0000269" key="2">
    <source>
    </source>
</evidence>
<evidence type="ECO:0000305" key="3"/>
<gene>
    <name type="primary">ALDH</name>
</gene>
<comment type="function">
    <text evidence="2">Oxidizes nonanal, propionaldehyde and acetaldehyde in vitro, in the following decreasing order of reactivity: nonanal, propionaldehyde, acetaldehyde.</text>
</comment>
<comment type="catalytic activity">
    <reaction>
        <text>an aldehyde + NAD(+) + H2O = a carboxylate + NADH + 2 H(+)</text>
        <dbReference type="Rhea" id="RHEA:16185"/>
        <dbReference type="ChEBI" id="CHEBI:15377"/>
        <dbReference type="ChEBI" id="CHEBI:15378"/>
        <dbReference type="ChEBI" id="CHEBI:17478"/>
        <dbReference type="ChEBI" id="CHEBI:29067"/>
        <dbReference type="ChEBI" id="CHEBI:57540"/>
        <dbReference type="ChEBI" id="CHEBI:57945"/>
        <dbReference type="EC" id="1.2.1.3"/>
    </reaction>
</comment>
<comment type="biophysicochemical properties">
    <kinetics>
        <KM evidence="2">2.2 uM for nonanal</KM>
        <KM evidence="2">267 uM for propionaldehyde</KM>
        <KM evidence="2">32.3 mM for acetaldehyde</KM>
        <Vmax evidence="2">0.03 umol/sec/mg enzyme with nonanal as substrate</Vmax>
        <Vmax evidence="2">0.196 umol/sec/mg enzyme with propionaldehyde as substrate</Vmax>
        <Vmax evidence="2">0.102 umol/sec/mg enzyme with acetaldehyde as substrate</Vmax>
        <text>Measured at pH 9.5 for all experiments.</text>
    </kinetics>
</comment>
<comment type="subcellular location">
    <subcellularLocation>
        <location evidence="2">Plastid</location>
        <location evidence="2">Amyloplast</location>
    </subcellularLocation>
    <subcellularLocation>
        <location evidence="2">Plastid</location>
        <location evidence="2">Chloroplast</location>
    </subcellularLocation>
</comment>
<comment type="induction">
    <text evidence="2">By abscisic acid (ABA) and dehydration.</text>
</comment>
<comment type="similarity">
    <text evidence="3">Belongs to the aldehyde dehydrogenase family.</text>
</comment>